<dbReference type="EC" id="3.5.1.18" evidence="1"/>
<dbReference type="EMBL" id="AE017282">
    <property type="protein sequence ID" value="AAU92186.1"/>
    <property type="molecule type" value="Genomic_DNA"/>
</dbReference>
<dbReference type="RefSeq" id="WP_010960825.1">
    <property type="nucleotide sequence ID" value="NC_002977.6"/>
</dbReference>
<dbReference type="SMR" id="Q608D9"/>
<dbReference type="STRING" id="243233.MCA1553"/>
<dbReference type="GeneID" id="88223825"/>
<dbReference type="KEGG" id="mca:MCA1553"/>
<dbReference type="eggNOG" id="COG0624">
    <property type="taxonomic scope" value="Bacteria"/>
</dbReference>
<dbReference type="HOGENOM" id="CLU_021802_4_0_6"/>
<dbReference type="UniPathway" id="UPA00034">
    <property type="reaction ID" value="UER00021"/>
</dbReference>
<dbReference type="Proteomes" id="UP000006821">
    <property type="component" value="Chromosome"/>
</dbReference>
<dbReference type="GO" id="GO:0008777">
    <property type="term" value="F:acetylornithine deacetylase activity"/>
    <property type="evidence" value="ECO:0007669"/>
    <property type="project" value="TreeGrafter"/>
</dbReference>
<dbReference type="GO" id="GO:0050897">
    <property type="term" value="F:cobalt ion binding"/>
    <property type="evidence" value="ECO:0007669"/>
    <property type="project" value="UniProtKB-UniRule"/>
</dbReference>
<dbReference type="GO" id="GO:0009014">
    <property type="term" value="F:succinyl-diaminopimelate desuccinylase activity"/>
    <property type="evidence" value="ECO:0007669"/>
    <property type="project" value="UniProtKB-UniRule"/>
</dbReference>
<dbReference type="GO" id="GO:0008270">
    <property type="term" value="F:zinc ion binding"/>
    <property type="evidence" value="ECO:0007669"/>
    <property type="project" value="UniProtKB-UniRule"/>
</dbReference>
<dbReference type="GO" id="GO:0019877">
    <property type="term" value="P:diaminopimelate biosynthetic process"/>
    <property type="evidence" value="ECO:0007669"/>
    <property type="project" value="UniProtKB-UniRule"/>
</dbReference>
<dbReference type="GO" id="GO:0006526">
    <property type="term" value="P:L-arginine biosynthetic process"/>
    <property type="evidence" value="ECO:0007669"/>
    <property type="project" value="TreeGrafter"/>
</dbReference>
<dbReference type="GO" id="GO:0009089">
    <property type="term" value="P:lysine biosynthetic process via diaminopimelate"/>
    <property type="evidence" value="ECO:0007669"/>
    <property type="project" value="UniProtKB-UniRule"/>
</dbReference>
<dbReference type="CDD" id="cd03891">
    <property type="entry name" value="M20_DapE_proteobac"/>
    <property type="match status" value="1"/>
</dbReference>
<dbReference type="FunFam" id="3.30.70.360:FF:000011">
    <property type="entry name" value="Succinyl-diaminopimelate desuccinylase"/>
    <property type="match status" value="1"/>
</dbReference>
<dbReference type="FunFam" id="3.40.630.10:FF:000005">
    <property type="entry name" value="Succinyl-diaminopimelate desuccinylase"/>
    <property type="match status" value="1"/>
</dbReference>
<dbReference type="Gene3D" id="3.40.630.10">
    <property type="entry name" value="Zn peptidases"/>
    <property type="match status" value="2"/>
</dbReference>
<dbReference type="HAMAP" id="MF_01690">
    <property type="entry name" value="DapE"/>
    <property type="match status" value="1"/>
</dbReference>
<dbReference type="InterPro" id="IPR001261">
    <property type="entry name" value="ArgE/DapE_CS"/>
</dbReference>
<dbReference type="InterPro" id="IPR036264">
    <property type="entry name" value="Bact_exopeptidase_dim_dom"/>
</dbReference>
<dbReference type="InterPro" id="IPR005941">
    <property type="entry name" value="DapE_proteobac"/>
</dbReference>
<dbReference type="InterPro" id="IPR002933">
    <property type="entry name" value="Peptidase_M20"/>
</dbReference>
<dbReference type="InterPro" id="IPR011650">
    <property type="entry name" value="Peptidase_M20_dimer"/>
</dbReference>
<dbReference type="InterPro" id="IPR050072">
    <property type="entry name" value="Peptidase_M20A"/>
</dbReference>
<dbReference type="NCBIfam" id="TIGR01246">
    <property type="entry name" value="dapE_proteo"/>
    <property type="match status" value="1"/>
</dbReference>
<dbReference type="NCBIfam" id="NF009557">
    <property type="entry name" value="PRK13009.1"/>
    <property type="match status" value="1"/>
</dbReference>
<dbReference type="PANTHER" id="PTHR43808">
    <property type="entry name" value="ACETYLORNITHINE DEACETYLASE"/>
    <property type="match status" value="1"/>
</dbReference>
<dbReference type="PANTHER" id="PTHR43808:SF31">
    <property type="entry name" value="N-ACETYL-L-CITRULLINE DEACETYLASE"/>
    <property type="match status" value="1"/>
</dbReference>
<dbReference type="Pfam" id="PF07687">
    <property type="entry name" value="M20_dimer"/>
    <property type="match status" value="1"/>
</dbReference>
<dbReference type="Pfam" id="PF01546">
    <property type="entry name" value="Peptidase_M20"/>
    <property type="match status" value="1"/>
</dbReference>
<dbReference type="SUPFAM" id="SSF55031">
    <property type="entry name" value="Bacterial exopeptidase dimerisation domain"/>
    <property type="match status" value="1"/>
</dbReference>
<dbReference type="SUPFAM" id="SSF53187">
    <property type="entry name" value="Zn-dependent exopeptidases"/>
    <property type="match status" value="1"/>
</dbReference>
<dbReference type="PROSITE" id="PS00759">
    <property type="entry name" value="ARGE_DAPE_CPG2_2"/>
    <property type="match status" value="1"/>
</dbReference>
<proteinExistence type="inferred from homology"/>
<protein>
    <recommendedName>
        <fullName evidence="1">Succinyl-diaminopimelate desuccinylase</fullName>
        <shortName evidence="1">SDAP desuccinylase</shortName>
        <ecNumber evidence="1">3.5.1.18</ecNumber>
    </recommendedName>
    <alternativeName>
        <fullName evidence="1">N-succinyl-LL-2,6-diaminoheptanedioate amidohydrolase</fullName>
    </alternativeName>
</protein>
<accession>Q608D9</accession>
<feature type="chain" id="PRO_0000375619" description="Succinyl-diaminopimelate desuccinylase">
    <location>
        <begin position="1"/>
        <end position="377"/>
    </location>
</feature>
<feature type="active site" evidence="1">
    <location>
        <position position="68"/>
    </location>
</feature>
<feature type="active site" description="Proton acceptor" evidence="1">
    <location>
        <position position="133"/>
    </location>
</feature>
<feature type="binding site" evidence="1">
    <location>
        <position position="66"/>
    </location>
    <ligand>
        <name>Zn(2+)</name>
        <dbReference type="ChEBI" id="CHEBI:29105"/>
        <label>1</label>
    </ligand>
</feature>
<feature type="binding site" evidence="1">
    <location>
        <position position="99"/>
    </location>
    <ligand>
        <name>Zn(2+)</name>
        <dbReference type="ChEBI" id="CHEBI:29105"/>
        <label>1</label>
    </ligand>
</feature>
<feature type="binding site" evidence="1">
    <location>
        <position position="99"/>
    </location>
    <ligand>
        <name>Zn(2+)</name>
        <dbReference type="ChEBI" id="CHEBI:29105"/>
        <label>2</label>
    </ligand>
</feature>
<feature type="binding site" evidence="1">
    <location>
        <position position="134"/>
    </location>
    <ligand>
        <name>Zn(2+)</name>
        <dbReference type="ChEBI" id="CHEBI:29105"/>
        <label>2</label>
    </ligand>
</feature>
<feature type="binding site" evidence="1">
    <location>
        <position position="162"/>
    </location>
    <ligand>
        <name>Zn(2+)</name>
        <dbReference type="ChEBI" id="CHEBI:29105"/>
        <label>1</label>
    </ligand>
</feature>
<feature type="binding site" evidence="1">
    <location>
        <position position="348"/>
    </location>
    <ligand>
        <name>Zn(2+)</name>
        <dbReference type="ChEBI" id="CHEBI:29105"/>
        <label>2</label>
    </ligand>
</feature>
<sequence>MSDTLDLAVELIRRESVTPEDAGCMDLVIERLAPHGFQAEWLNFGDTKNLWLRRGEAAPLFVFLGHTDVVPPGPLEDWSSPPFAPEIREGRLYGRGAADMKGSIAAMTTALQRFVVHHPGHPGSLAVLLTSDEEGSAYDGVVKVVDVLKSRDTVIDWCLVGEPSSFARLGDVIRVGRRGSLGGVLRILGVQGHVAYPDKADNPIHRFAPALHELTTEIWDGGNEFFPPTSFQVSNIRAGTGADNVIPGKLEVLFNFRFSTELTVEAIQRRVETILDRHGLHYELSWRLSGLPFLTRETELVSATRAAIAAVTGLQPRADTGGGTSDGRFIAPTGAQVVELGPLNGSIHKIDEHVAVEDLEALSAIYERILGNLLAVL</sequence>
<reference key="1">
    <citation type="journal article" date="2004" name="PLoS Biol.">
        <title>Genomic insights into methanotrophy: the complete genome sequence of Methylococcus capsulatus (Bath).</title>
        <authorList>
            <person name="Ward N.L."/>
            <person name="Larsen O."/>
            <person name="Sakwa J."/>
            <person name="Bruseth L."/>
            <person name="Khouri H.M."/>
            <person name="Durkin A.S."/>
            <person name="Dimitrov G."/>
            <person name="Jiang L."/>
            <person name="Scanlan D."/>
            <person name="Kang K.H."/>
            <person name="Lewis M.R."/>
            <person name="Nelson K.E."/>
            <person name="Methe B.A."/>
            <person name="Wu M."/>
            <person name="Heidelberg J.F."/>
            <person name="Paulsen I.T."/>
            <person name="Fouts D.E."/>
            <person name="Ravel J."/>
            <person name="Tettelin H."/>
            <person name="Ren Q."/>
            <person name="Read T.D."/>
            <person name="DeBoy R.T."/>
            <person name="Seshadri R."/>
            <person name="Salzberg S.L."/>
            <person name="Jensen H.B."/>
            <person name="Birkeland N.K."/>
            <person name="Nelson W.C."/>
            <person name="Dodson R.J."/>
            <person name="Grindhaug S.H."/>
            <person name="Holt I.E."/>
            <person name="Eidhammer I."/>
            <person name="Jonasen I."/>
            <person name="Vanaken S."/>
            <person name="Utterback T.R."/>
            <person name="Feldblyum T.V."/>
            <person name="Fraser C.M."/>
            <person name="Lillehaug J.R."/>
            <person name="Eisen J.A."/>
        </authorList>
    </citation>
    <scope>NUCLEOTIDE SEQUENCE [LARGE SCALE GENOMIC DNA]</scope>
    <source>
        <strain>ATCC 33009 / NCIMB 11132 / Bath</strain>
    </source>
</reference>
<organism>
    <name type="scientific">Methylococcus capsulatus (strain ATCC 33009 / NCIMB 11132 / Bath)</name>
    <dbReference type="NCBI Taxonomy" id="243233"/>
    <lineage>
        <taxon>Bacteria</taxon>
        <taxon>Pseudomonadati</taxon>
        <taxon>Pseudomonadota</taxon>
        <taxon>Gammaproteobacteria</taxon>
        <taxon>Methylococcales</taxon>
        <taxon>Methylococcaceae</taxon>
        <taxon>Methylococcus</taxon>
    </lineage>
</organism>
<comment type="function">
    <text evidence="1">Catalyzes the hydrolysis of N-succinyl-L,L-diaminopimelic acid (SDAP), forming succinate and LL-2,6-diaminopimelate (DAP), an intermediate involved in the bacterial biosynthesis of lysine and meso-diaminopimelic acid, an essential component of bacterial cell walls.</text>
</comment>
<comment type="catalytic activity">
    <reaction evidence="1">
        <text>N-succinyl-(2S,6S)-2,6-diaminopimelate + H2O = (2S,6S)-2,6-diaminopimelate + succinate</text>
        <dbReference type="Rhea" id="RHEA:22608"/>
        <dbReference type="ChEBI" id="CHEBI:15377"/>
        <dbReference type="ChEBI" id="CHEBI:30031"/>
        <dbReference type="ChEBI" id="CHEBI:57609"/>
        <dbReference type="ChEBI" id="CHEBI:58087"/>
        <dbReference type="EC" id="3.5.1.18"/>
    </reaction>
</comment>
<comment type="cofactor">
    <cofactor evidence="1">
        <name>Zn(2+)</name>
        <dbReference type="ChEBI" id="CHEBI:29105"/>
    </cofactor>
    <cofactor evidence="1">
        <name>Co(2+)</name>
        <dbReference type="ChEBI" id="CHEBI:48828"/>
    </cofactor>
    <text evidence="1">Binds 2 Zn(2+) or Co(2+) ions per subunit.</text>
</comment>
<comment type="pathway">
    <text evidence="1">Amino-acid biosynthesis; L-lysine biosynthesis via DAP pathway; LL-2,6-diaminopimelate from (S)-tetrahydrodipicolinate (succinylase route): step 3/3.</text>
</comment>
<comment type="subunit">
    <text evidence="1">Homodimer.</text>
</comment>
<comment type="similarity">
    <text evidence="1">Belongs to the peptidase M20A family. DapE subfamily.</text>
</comment>
<keyword id="KW-0028">Amino-acid biosynthesis</keyword>
<keyword id="KW-0170">Cobalt</keyword>
<keyword id="KW-0220">Diaminopimelate biosynthesis</keyword>
<keyword id="KW-0378">Hydrolase</keyword>
<keyword id="KW-0457">Lysine biosynthesis</keyword>
<keyword id="KW-0479">Metal-binding</keyword>
<keyword id="KW-1185">Reference proteome</keyword>
<keyword id="KW-0862">Zinc</keyword>
<name>DAPE_METCA</name>
<evidence type="ECO:0000255" key="1">
    <source>
        <dbReference type="HAMAP-Rule" id="MF_01690"/>
    </source>
</evidence>
<gene>
    <name evidence="1" type="primary">dapE</name>
    <name type="ordered locus">MCA1553</name>
</gene>